<comment type="similarity">
    <text evidence="1">To E.coli HemX N-terminal region.</text>
</comment>
<reference key="1">
    <citation type="journal article" date="1995" name="Science">
        <title>Whole-genome random sequencing and assembly of Haemophilus influenzae Rd.</title>
        <authorList>
            <person name="Fleischmann R.D."/>
            <person name="Adams M.D."/>
            <person name="White O."/>
            <person name="Clayton R.A."/>
            <person name="Kirkness E.F."/>
            <person name="Kerlavage A.R."/>
            <person name="Bult C.J."/>
            <person name="Tomb J.-F."/>
            <person name="Dougherty B.A."/>
            <person name="Merrick J.M."/>
            <person name="McKenney K."/>
            <person name="Sutton G.G."/>
            <person name="FitzHugh W."/>
            <person name="Fields C.A."/>
            <person name="Gocayne J.D."/>
            <person name="Scott J.D."/>
            <person name="Shirley R."/>
            <person name="Liu L.-I."/>
            <person name="Glodek A."/>
            <person name="Kelley J.M."/>
            <person name="Weidman J.F."/>
            <person name="Phillips C.A."/>
            <person name="Spriggs T."/>
            <person name="Hedblom E."/>
            <person name="Cotton M.D."/>
            <person name="Utterback T.R."/>
            <person name="Hanna M.C."/>
            <person name="Nguyen D.T."/>
            <person name="Saudek D.M."/>
            <person name="Brandon R.C."/>
            <person name="Fine L.D."/>
            <person name="Fritchman J.L."/>
            <person name="Fuhrmann J.L."/>
            <person name="Geoghagen N.S.M."/>
            <person name="Gnehm C.L."/>
            <person name="McDonald L.A."/>
            <person name="Small K.V."/>
            <person name="Fraser C.M."/>
            <person name="Smith H.O."/>
            <person name="Venter J.C."/>
        </authorList>
    </citation>
    <scope>NUCLEOTIDE SEQUENCE [LARGE SCALE GENOMIC DNA]</scope>
    <source>
        <strain>ATCC 51907 / DSM 11121 / KW20 / Rd</strain>
    </source>
</reference>
<reference key="2">
    <citation type="journal article" date="2000" name="Electrophoresis">
        <title>Two-dimensional map of the proteome of Haemophilus influenzae.</title>
        <authorList>
            <person name="Langen H."/>
            <person name="Takacs B."/>
            <person name="Evers S."/>
            <person name="Berndt P."/>
            <person name="Lahm H.W."/>
            <person name="Wipf B."/>
            <person name="Gray C."/>
            <person name="Fountoulakis M."/>
        </authorList>
    </citation>
    <scope>IDENTIFICATION BY MASS SPECTROMETRY</scope>
    <source>
        <strain>ATCC 51907 / DSM 11121 / KW20 / Rd</strain>
    </source>
</reference>
<feature type="chain" id="PRO_0000135257" description="Uncharacterized protein HI_0603">
    <location>
        <begin position="1"/>
        <end position="230"/>
    </location>
</feature>
<keyword id="KW-1185">Reference proteome</keyword>
<gene>
    <name type="ordered locus">HI_0603</name>
</gene>
<organism>
    <name type="scientific">Haemophilus influenzae (strain ATCC 51907 / DSM 11121 / KW20 / Rd)</name>
    <dbReference type="NCBI Taxonomy" id="71421"/>
    <lineage>
        <taxon>Bacteria</taxon>
        <taxon>Pseudomonadati</taxon>
        <taxon>Pseudomonadota</taxon>
        <taxon>Gammaproteobacteria</taxon>
        <taxon>Pasteurellales</taxon>
        <taxon>Pasteurellaceae</taxon>
        <taxon>Haemophilus</taxon>
    </lineage>
</organism>
<accession>P44773</accession>
<protein>
    <recommendedName>
        <fullName>Uncharacterized protein HI_0603</fullName>
    </recommendedName>
</protein>
<name>Y603_HAEIN</name>
<sequence>MAKEQPNDLTEQLTDTPKTAVEQAETMQSVPQTIVKKTGTALSLLAILVALGIGGAGYYFGQQQMAKIQQKLTALENQTGANLSSNNTNNNKRLTQLEQSLKTAQENIAQLEQLIVSKTGEITSLQTQMKQVSQLAIAQQPSDWLFSEADFLLNNALRKLVLDNDVDTAVSLLKLADETLVKVNNSQANEIRSAINQDLKQLLSLSSVDQNAIMQKLSQLANTVDELQRL</sequence>
<evidence type="ECO:0000305" key="1"/>
<dbReference type="EMBL" id="L42023">
    <property type="protein sequence ID" value="AAC22261.1"/>
    <property type="molecule type" value="Genomic_DNA"/>
</dbReference>
<dbReference type="PIR" id="D64080">
    <property type="entry name" value="D64080"/>
</dbReference>
<dbReference type="SMR" id="P44773"/>
<dbReference type="STRING" id="71421.HI_0603"/>
<dbReference type="EnsemblBacteria" id="AAC22261">
    <property type="protein sequence ID" value="AAC22261"/>
    <property type="gene ID" value="HI_0603"/>
</dbReference>
<dbReference type="KEGG" id="hin:HI_0603"/>
<dbReference type="eggNOG" id="COG2959">
    <property type="taxonomic scope" value="Bacteria"/>
</dbReference>
<dbReference type="HOGENOM" id="CLU_1203463_0_0_6"/>
<dbReference type="PhylomeDB" id="P44773"/>
<dbReference type="Proteomes" id="UP000000579">
    <property type="component" value="Chromosome"/>
</dbReference>
<dbReference type="Gene3D" id="1.20.5.340">
    <property type="match status" value="1"/>
</dbReference>
<dbReference type="InterPro" id="IPR007470">
    <property type="entry name" value="HemX"/>
</dbReference>
<dbReference type="PANTHER" id="PTHR38043">
    <property type="entry name" value="PROTEIN HEMX"/>
    <property type="match status" value="1"/>
</dbReference>
<dbReference type="PANTHER" id="PTHR38043:SF1">
    <property type="entry name" value="PROTEIN HEMX"/>
    <property type="match status" value="1"/>
</dbReference>
<dbReference type="Pfam" id="PF04375">
    <property type="entry name" value="HemX"/>
    <property type="match status" value="1"/>
</dbReference>
<proteinExistence type="evidence at protein level"/>